<dbReference type="EC" id="2.7.10.2"/>
<dbReference type="EMBL" id="M15990">
    <property type="protein sequence ID" value="AAA35735.1"/>
    <property type="molecule type" value="mRNA"/>
</dbReference>
<dbReference type="EMBL" id="AP001178">
    <property type="status" value="NOT_ANNOTATED_CDS"/>
    <property type="molecule type" value="Genomic_DNA"/>
</dbReference>
<dbReference type="EMBL" id="CH471113">
    <property type="protein sequence ID" value="EAX01709.1"/>
    <property type="molecule type" value="Genomic_DNA"/>
</dbReference>
<dbReference type="EMBL" id="CH471113">
    <property type="protein sequence ID" value="EAX01710.1"/>
    <property type="molecule type" value="Genomic_DNA"/>
</dbReference>
<dbReference type="EMBL" id="BC048960">
    <property type="protein sequence ID" value="AAH48960.1"/>
    <property type="molecule type" value="mRNA"/>
</dbReference>
<dbReference type="CCDS" id="CCDS11824.1"/>
<dbReference type="PIR" id="A26714">
    <property type="entry name" value="TVHUYS"/>
</dbReference>
<dbReference type="RefSeq" id="NP_005424.1">
    <property type="nucleotide sequence ID" value="NM_005433.4"/>
</dbReference>
<dbReference type="RefSeq" id="XP_016881449.1">
    <property type="nucleotide sequence ID" value="XM_017025960.3"/>
</dbReference>
<dbReference type="RefSeq" id="XP_024307011.1">
    <property type="nucleotide sequence ID" value="XM_024451243.2"/>
</dbReference>
<dbReference type="RefSeq" id="XP_024307012.1">
    <property type="nucleotide sequence ID" value="XM_024451244.2"/>
</dbReference>
<dbReference type="RefSeq" id="XP_024307013.1">
    <property type="nucleotide sequence ID" value="XM_024451245.2"/>
</dbReference>
<dbReference type="RefSeq" id="XP_024307014.1">
    <property type="nucleotide sequence ID" value="XM_024451246.2"/>
</dbReference>
<dbReference type="RefSeq" id="XP_054175018.1">
    <property type="nucleotide sequence ID" value="XM_054319043.1"/>
</dbReference>
<dbReference type="RefSeq" id="XP_054175019.1">
    <property type="nucleotide sequence ID" value="XM_054319044.1"/>
</dbReference>
<dbReference type="RefSeq" id="XP_054175020.1">
    <property type="nucleotide sequence ID" value="XM_054319045.1"/>
</dbReference>
<dbReference type="RefSeq" id="XP_054175021.1">
    <property type="nucleotide sequence ID" value="XM_054319046.1"/>
</dbReference>
<dbReference type="RefSeq" id="XP_054175022.1">
    <property type="nucleotide sequence ID" value="XM_054319047.1"/>
</dbReference>
<dbReference type="PDB" id="2HDA">
    <property type="method" value="X-ray"/>
    <property type="resolution" value="1.90 A"/>
    <property type="chains" value="A=91-152"/>
</dbReference>
<dbReference type="PDBsum" id="2HDA"/>
<dbReference type="SMR" id="P07947"/>
<dbReference type="BioGRID" id="113357">
    <property type="interactions" value="435"/>
</dbReference>
<dbReference type="CORUM" id="P07947"/>
<dbReference type="DIP" id="DIP-33849N"/>
<dbReference type="ELM" id="P07947"/>
<dbReference type="FunCoup" id="P07947">
    <property type="interactions" value="1387"/>
</dbReference>
<dbReference type="IntAct" id="P07947">
    <property type="interactions" value="241"/>
</dbReference>
<dbReference type="MINT" id="P07947"/>
<dbReference type="STRING" id="9606.ENSP00000462468"/>
<dbReference type="BindingDB" id="P07947"/>
<dbReference type="ChEMBL" id="CHEMBL2073"/>
<dbReference type="DrugBank" id="DB01254">
    <property type="generic name" value="Dasatinib"/>
</dbReference>
<dbReference type="DrugBank" id="DB12010">
    <property type="generic name" value="Fostamatinib"/>
</dbReference>
<dbReference type="DrugCentral" id="P07947"/>
<dbReference type="GuidetoPHARMACOLOGY" id="2284"/>
<dbReference type="GlyGen" id="P07947">
    <property type="glycosylation" value="1 site, 1 O-linked glycan (1 site)"/>
</dbReference>
<dbReference type="iPTMnet" id="P07947"/>
<dbReference type="PhosphoSitePlus" id="P07947"/>
<dbReference type="SwissPalm" id="P07947"/>
<dbReference type="BioMuta" id="YES1"/>
<dbReference type="DMDM" id="125870"/>
<dbReference type="CPTAC" id="CPTAC-3057"/>
<dbReference type="jPOST" id="P07947"/>
<dbReference type="MassIVE" id="P07947"/>
<dbReference type="PaxDb" id="9606-ENSP00000462468"/>
<dbReference type="PeptideAtlas" id="P07947"/>
<dbReference type="ProteomicsDB" id="52044"/>
<dbReference type="Pumba" id="P07947"/>
<dbReference type="Antibodypedia" id="3819">
    <property type="antibodies" value="495 antibodies from 37 providers"/>
</dbReference>
<dbReference type="DNASU" id="7525"/>
<dbReference type="Ensembl" id="ENST00000314574.5">
    <property type="protein sequence ID" value="ENSP00000324740.4"/>
    <property type="gene ID" value="ENSG00000176105.14"/>
</dbReference>
<dbReference type="Ensembl" id="ENST00000584307.5">
    <property type="protein sequence ID" value="ENSP00000462468.1"/>
    <property type="gene ID" value="ENSG00000176105.14"/>
</dbReference>
<dbReference type="GeneID" id="7525"/>
<dbReference type="KEGG" id="hsa:7525"/>
<dbReference type="MANE-Select" id="ENST00000314574.5">
    <property type="protein sequence ID" value="ENSP00000324740.4"/>
    <property type="RefSeq nucleotide sequence ID" value="NM_005433.4"/>
    <property type="RefSeq protein sequence ID" value="NP_005424.1"/>
</dbReference>
<dbReference type="UCSC" id="uc002kky.4">
    <property type="organism name" value="human"/>
</dbReference>
<dbReference type="AGR" id="HGNC:12841"/>
<dbReference type="CTD" id="7525"/>
<dbReference type="DisGeNET" id="7525"/>
<dbReference type="GeneCards" id="YES1"/>
<dbReference type="HGNC" id="HGNC:12841">
    <property type="gene designation" value="YES1"/>
</dbReference>
<dbReference type="HPA" id="ENSG00000176105">
    <property type="expression patterns" value="Low tissue specificity"/>
</dbReference>
<dbReference type="MIM" id="164880">
    <property type="type" value="gene"/>
</dbReference>
<dbReference type="neXtProt" id="NX_P07947"/>
<dbReference type="OpenTargets" id="ENSG00000176105"/>
<dbReference type="PharmGKB" id="PA37432"/>
<dbReference type="VEuPathDB" id="HostDB:ENSG00000176105"/>
<dbReference type="eggNOG" id="KOG0197">
    <property type="taxonomic scope" value="Eukaryota"/>
</dbReference>
<dbReference type="GeneTree" id="ENSGT00940000154920"/>
<dbReference type="HOGENOM" id="CLU_000288_7_2_1"/>
<dbReference type="InParanoid" id="P07947"/>
<dbReference type="OrthoDB" id="4062651at2759"/>
<dbReference type="PAN-GO" id="P07947">
    <property type="GO annotations" value="6 GO annotations based on evolutionary models"/>
</dbReference>
<dbReference type="PhylomeDB" id="P07947"/>
<dbReference type="TreeFam" id="TF351634"/>
<dbReference type="BRENDA" id="2.7.10.2">
    <property type="organism ID" value="2681"/>
</dbReference>
<dbReference type="PathwayCommons" id="P07947"/>
<dbReference type="Reactome" id="R-HSA-1227986">
    <property type="pathway name" value="Signaling by ERBB2"/>
</dbReference>
<dbReference type="Reactome" id="R-HSA-1433557">
    <property type="pathway name" value="Signaling by SCF-KIT"/>
</dbReference>
<dbReference type="Reactome" id="R-HSA-1433559">
    <property type="pathway name" value="Regulation of KIT signaling"/>
</dbReference>
<dbReference type="Reactome" id="R-HSA-2029481">
    <property type="pathway name" value="FCGR activation"/>
</dbReference>
<dbReference type="Reactome" id="R-HSA-210990">
    <property type="pathway name" value="PECAM1 interactions"/>
</dbReference>
<dbReference type="Reactome" id="R-HSA-2682334">
    <property type="pathway name" value="EPH-Ephrin signaling"/>
</dbReference>
<dbReference type="Reactome" id="R-HSA-389356">
    <property type="pathway name" value="Co-stimulation by CD28"/>
</dbReference>
<dbReference type="Reactome" id="R-HSA-389513">
    <property type="pathway name" value="Co-inhibition by CTLA4"/>
</dbReference>
<dbReference type="Reactome" id="R-HSA-3928662">
    <property type="pathway name" value="EPHB-mediated forward signaling"/>
</dbReference>
<dbReference type="Reactome" id="R-HSA-3928663">
    <property type="pathway name" value="EPHA-mediated growth cone collapse"/>
</dbReference>
<dbReference type="Reactome" id="R-HSA-3928665">
    <property type="pathway name" value="EPH-ephrin mediated repulsion of cells"/>
</dbReference>
<dbReference type="Reactome" id="R-HSA-8940973">
    <property type="pathway name" value="RUNX2 regulates osteoblast differentiation"/>
</dbReference>
<dbReference type="Reactome" id="R-HSA-912631">
    <property type="pathway name" value="Regulation of signaling by CBL"/>
</dbReference>
<dbReference type="Reactome" id="R-HSA-9664323">
    <property type="pathway name" value="FCGR3A-mediated IL10 synthesis"/>
</dbReference>
<dbReference type="Reactome" id="R-HSA-9664422">
    <property type="pathway name" value="FCGR3A-mediated phagocytosis"/>
</dbReference>
<dbReference type="Reactome" id="R-HSA-9670439">
    <property type="pathway name" value="Signaling by phosphorylated juxtamembrane, extracellular and kinase domain KIT mutants"/>
</dbReference>
<dbReference type="Reactome" id="R-HSA-9680350">
    <property type="pathway name" value="Signaling by CSF1 (M-CSF) in myeloid cells"/>
</dbReference>
<dbReference type="SignaLink" id="P07947"/>
<dbReference type="SIGNOR" id="P07947"/>
<dbReference type="BioGRID-ORCS" id="7525">
    <property type="hits" value="23 hits in 1193 CRISPR screens"/>
</dbReference>
<dbReference type="CD-CODE" id="DEE660B4">
    <property type="entry name" value="Stress granule"/>
</dbReference>
<dbReference type="CD-CODE" id="FB4E32DD">
    <property type="entry name" value="Presynaptic clusters and postsynaptic densities"/>
</dbReference>
<dbReference type="ChiTaRS" id="YES1">
    <property type="organism name" value="human"/>
</dbReference>
<dbReference type="EvolutionaryTrace" id="P07947"/>
<dbReference type="GeneWiki" id="YES1"/>
<dbReference type="GenomeRNAi" id="7525"/>
<dbReference type="Pharos" id="P07947">
    <property type="development level" value="Tclin"/>
</dbReference>
<dbReference type="PRO" id="PR:P07947"/>
<dbReference type="Proteomes" id="UP000005640">
    <property type="component" value="Chromosome 18"/>
</dbReference>
<dbReference type="RNAct" id="P07947">
    <property type="molecule type" value="protein"/>
</dbReference>
<dbReference type="Bgee" id="ENSG00000176105">
    <property type="expression patterns" value="Expressed in secondary oocyte and 217 other cell types or tissues"/>
</dbReference>
<dbReference type="ExpressionAtlas" id="P07947">
    <property type="expression patterns" value="baseline and differential"/>
</dbReference>
<dbReference type="GO" id="GO:0005884">
    <property type="term" value="C:actin filament"/>
    <property type="evidence" value="ECO:0007669"/>
    <property type="project" value="Ensembl"/>
</dbReference>
<dbReference type="GO" id="GO:0005813">
    <property type="term" value="C:centrosome"/>
    <property type="evidence" value="ECO:0007669"/>
    <property type="project" value="UniProtKB-SubCell"/>
</dbReference>
<dbReference type="GO" id="GO:0005829">
    <property type="term" value="C:cytosol"/>
    <property type="evidence" value="ECO:0000314"/>
    <property type="project" value="HPA"/>
</dbReference>
<dbReference type="GO" id="GO:0070062">
    <property type="term" value="C:extracellular exosome"/>
    <property type="evidence" value="ECO:0007005"/>
    <property type="project" value="UniProtKB"/>
</dbReference>
<dbReference type="GO" id="GO:0005925">
    <property type="term" value="C:focal adhesion"/>
    <property type="evidence" value="ECO:0007005"/>
    <property type="project" value="UniProtKB"/>
</dbReference>
<dbReference type="GO" id="GO:0005794">
    <property type="term" value="C:Golgi apparatus"/>
    <property type="evidence" value="ECO:0000314"/>
    <property type="project" value="UniProtKB"/>
</dbReference>
<dbReference type="GO" id="GO:0005886">
    <property type="term" value="C:plasma membrane"/>
    <property type="evidence" value="ECO:0000314"/>
    <property type="project" value="UniProtKB"/>
</dbReference>
<dbReference type="GO" id="GO:0005524">
    <property type="term" value="F:ATP binding"/>
    <property type="evidence" value="ECO:0007669"/>
    <property type="project" value="UniProtKB-KW"/>
</dbReference>
<dbReference type="GO" id="GO:0019899">
    <property type="term" value="F:enzyme binding"/>
    <property type="evidence" value="ECO:0000353"/>
    <property type="project" value="UniProtKB"/>
</dbReference>
<dbReference type="GO" id="GO:0004715">
    <property type="term" value="F:non-membrane spanning protein tyrosine kinase activity"/>
    <property type="evidence" value="ECO:0000318"/>
    <property type="project" value="GO_Central"/>
</dbReference>
<dbReference type="GO" id="GO:0001784">
    <property type="term" value="F:phosphotyrosine residue binding"/>
    <property type="evidence" value="ECO:0000353"/>
    <property type="project" value="CAFA"/>
</dbReference>
<dbReference type="GO" id="GO:0004713">
    <property type="term" value="F:protein tyrosine kinase activity"/>
    <property type="evidence" value="ECO:0000314"/>
    <property type="project" value="UniProtKB"/>
</dbReference>
<dbReference type="GO" id="GO:0005102">
    <property type="term" value="F:signaling receptor binding"/>
    <property type="evidence" value="ECO:0000318"/>
    <property type="project" value="GO_Central"/>
</dbReference>
<dbReference type="GO" id="GO:0044325">
    <property type="term" value="F:transmembrane transporter binding"/>
    <property type="evidence" value="ECO:0000353"/>
    <property type="project" value="BHF-UCL"/>
</dbReference>
<dbReference type="GO" id="GO:0030154">
    <property type="term" value="P:cell differentiation"/>
    <property type="evidence" value="ECO:0000318"/>
    <property type="project" value="GO_Central"/>
</dbReference>
<dbReference type="GO" id="GO:0007169">
    <property type="term" value="P:cell surface receptor protein tyrosine kinase signaling pathway"/>
    <property type="evidence" value="ECO:0000318"/>
    <property type="project" value="GO_Central"/>
</dbReference>
<dbReference type="GO" id="GO:0036120">
    <property type="term" value="P:cellular response to platelet-derived growth factor stimulus"/>
    <property type="evidence" value="ECO:0007669"/>
    <property type="project" value="Ensembl"/>
</dbReference>
<dbReference type="GO" id="GO:0071300">
    <property type="term" value="P:cellular response to retinoic acid"/>
    <property type="evidence" value="ECO:0007669"/>
    <property type="project" value="Ensembl"/>
</dbReference>
<dbReference type="GO" id="GO:0071560">
    <property type="term" value="P:cellular response to transforming growth factor beta stimulus"/>
    <property type="evidence" value="ECO:0007669"/>
    <property type="project" value="Ensembl"/>
</dbReference>
<dbReference type="GO" id="GO:0048013">
    <property type="term" value="P:ephrin receptor signaling pathway"/>
    <property type="evidence" value="ECO:0000304"/>
    <property type="project" value="Reactome"/>
</dbReference>
<dbReference type="GO" id="GO:0038096">
    <property type="term" value="P:Fc-gamma receptor signaling pathway involved in phagocytosis"/>
    <property type="evidence" value="ECO:0000304"/>
    <property type="project" value="Reactome"/>
</dbReference>
<dbReference type="GO" id="GO:0050900">
    <property type="term" value="P:leukocyte migration"/>
    <property type="evidence" value="ECO:0000304"/>
    <property type="project" value="Reactome"/>
</dbReference>
<dbReference type="GO" id="GO:0002862">
    <property type="term" value="P:negative regulation of inflammatory response to antigenic stimulus"/>
    <property type="evidence" value="ECO:0000304"/>
    <property type="project" value="Reactome"/>
</dbReference>
<dbReference type="GO" id="GO:0045944">
    <property type="term" value="P:positive regulation of transcription by RNA polymerase II"/>
    <property type="evidence" value="ECO:0007669"/>
    <property type="project" value="Ensembl"/>
</dbReference>
<dbReference type="GO" id="GO:0036211">
    <property type="term" value="P:protein modification process"/>
    <property type="evidence" value="ECO:0000304"/>
    <property type="project" value="ProtInc"/>
</dbReference>
<dbReference type="GO" id="GO:0010827">
    <property type="term" value="P:regulation of D-glucose transmembrane transport"/>
    <property type="evidence" value="ECO:0007669"/>
    <property type="project" value="Ensembl"/>
</dbReference>
<dbReference type="GO" id="GO:0043114">
    <property type="term" value="P:regulation of vascular permeability"/>
    <property type="evidence" value="ECO:0000304"/>
    <property type="project" value="BHF-UCL"/>
</dbReference>
<dbReference type="GO" id="GO:0031295">
    <property type="term" value="P:T cell costimulation"/>
    <property type="evidence" value="ECO:0000304"/>
    <property type="project" value="Reactome"/>
</dbReference>
<dbReference type="CDD" id="cd05069">
    <property type="entry name" value="PTKc_Yes"/>
    <property type="match status" value="1"/>
</dbReference>
<dbReference type="CDD" id="cd09933">
    <property type="entry name" value="SH2_Src_family"/>
    <property type="match status" value="1"/>
</dbReference>
<dbReference type="CDD" id="cd12007">
    <property type="entry name" value="SH3_Yes"/>
    <property type="match status" value="1"/>
</dbReference>
<dbReference type="FunFam" id="1.10.510.10:FF:000553">
    <property type="entry name" value="Tyrosine-protein kinase"/>
    <property type="match status" value="1"/>
</dbReference>
<dbReference type="FunFam" id="2.30.30.40:FF:000022">
    <property type="entry name" value="Tyrosine-protein kinase"/>
    <property type="match status" value="1"/>
</dbReference>
<dbReference type="FunFam" id="3.30.200.20:FF:000016">
    <property type="entry name" value="Tyrosine-protein kinase"/>
    <property type="match status" value="1"/>
</dbReference>
<dbReference type="FunFam" id="3.30.505.10:FF:000001">
    <property type="entry name" value="Tyrosine-protein kinase"/>
    <property type="match status" value="1"/>
</dbReference>
<dbReference type="Gene3D" id="3.30.200.20">
    <property type="entry name" value="Phosphorylase Kinase, domain 1"/>
    <property type="match status" value="1"/>
</dbReference>
<dbReference type="Gene3D" id="3.30.505.10">
    <property type="entry name" value="SH2 domain"/>
    <property type="match status" value="1"/>
</dbReference>
<dbReference type="Gene3D" id="2.30.30.40">
    <property type="entry name" value="SH3 Domains"/>
    <property type="match status" value="1"/>
</dbReference>
<dbReference type="Gene3D" id="1.10.510.10">
    <property type="entry name" value="Transferase(Phosphotransferase) domain 1"/>
    <property type="match status" value="1"/>
</dbReference>
<dbReference type="InterPro" id="IPR011009">
    <property type="entry name" value="Kinase-like_dom_sf"/>
</dbReference>
<dbReference type="InterPro" id="IPR050198">
    <property type="entry name" value="Non-receptor_tyrosine_kinases"/>
</dbReference>
<dbReference type="InterPro" id="IPR000719">
    <property type="entry name" value="Prot_kinase_dom"/>
</dbReference>
<dbReference type="InterPro" id="IPR017441">
    <property type="entry name" value="Protein_kinase_ATP_BS"/>
</dbReference>
<dbReference type="InterPro" id="IPR001245">
    <property type="entry name" value="Ser-Thr/Tyr_kinase_cat_dom"/>
</dbReference>
<dbReference type="InterPro" id="IPR000980">
    <property type="entry name" value="SH2"/>
</dbReference>
<dbReference type="InterPro" id="IPR036860">
    <property type="entry name" value="SH2_dom_sf"/>
</dbReference>
<dbReference type="InterPro" id="IPR036028">
    <property type="entry name" value="SH3-like_dom_sf"/>
</dbReference>
<dbReference type="InterPro" id="IPR001452">
    <property type="entry name" value="SH3_domain"/>
</dbReference>
<dbReference type="InterPro" id="IPR008266">
    <property type="entry name" value="Tyr_kinase_AS"/>
</dbReference>
<dbReference type="InterPro" id="IPR020635">
    <property type="entry name" value="Tyr_kinase_cat_dom"/>
</dbReference>
<dbReference type="InterPro" id="IPR035751">
    <property type="entry name" value="Yes_SH3"/>
</dbReference>
<dbReference type="PANTHER" id="PTHR24418">
    <property type="entry name" value="TYROSINE-PROTEIN KINASE"/>
    <property type="match status" value="1"/>
</dbReference>
<dbReference type="Pfam" id="PF07714">
    <property type="entry name" value="PK_Tyr_Ser-Thr"/>
    <property type="match status" value="1"/>
</dbReference>
<dbReference type="Pfam" id="PF00017">
    <property type="entry name" value="SH2"/>
    <property type="match status" value="1"/>
</dbReference>
<dbReference type="Pfam" id="PF00018">
    <property type="entry name" value="SH3_1"/>
    <property type="match status" value="1"/>
</dbReference>
<dbReference type="PRINTS" id="PR00401">
    <property type="entry name" value="SH2DOMAIN"/>
</dbReference>
<dbReference type="PRINTS" id="PR00452">
    <property type="entry name" value="SH3DOMAIN"/>
</dbReference>
<dbReference type="PRINTS" id="PR00109">
    <property type="entry name" value="TYRKINASE"/>
</dbReference>
<dbReference type="SMART" id="SM00252">
    <property type="entry name" value="SH2"/>
    <property type="match status" value="1"/>
</dbReference>
<dbReference type="SMART" id="SM00326">
    <property type="entry name" value="SH3"/>
    <property type="match status" value="1"/>
</dbReference>
<dbReference type="SMART" id="SM00219">
    <property type="entry name" value="TyrKc"/>
    <property type="match status" value="1"/>
</dbReference>
<dbReference type="SUPFAM" id="SSF56112">
    <property type="entry name" value="Protein kinase-like (PK-like)"/>
    <property type="match status" value="1"/>
</dbReference>
<dbReference type="SUPFAM" id="SSF55550">
    <property type="entry name" value="SH2 domain"/>
    <property type="match status" value="1"/>
</dbReference>
<dbReference type="SUPFAM" id="SSF50044">
    <property type="entry name" value="SH3-domain"/>
    <property type="match status" value="1"/>
</dbReference>
<dbReference type="PROSITE" id="PS00107">
    <property type="entry name" value="PROTEIN_KINASE_ATP"/>
    <property type="match status" value="1"/>
</dbReference>
<dbReference type="PROSITE" id="PS50011">
    <property type="entry name" value="PROTEIN_KINASE_DOM"/>
    <property type="match status" value="1"/>
</dbReference>
<dbReference type="PROSITE" id="PS00109">
    <property type="entry name" value="PROTEIN_KINASE_TYR"/>
    <property type="match status" value="1"/>
</dbReference>
<dbReference type="PROSITE" id="PS50001">
    <property type="entry name" value="SH2"/>
    <property type="match status" value="1"/>
</dbReference>
<dbReference type="PROSITE" id="PS50002">
    <property type="entry name" value="SH3"/>
    <property type="match status" value="1"/>
</dbReference>
<sequence length="543" mass="60801">MGCIKSKENKSPAIKYRPENTPEPVSTSVSHYGAEPTTVSPCPSSSAKGTAVNFSSLSMTPFGGSSGVTPFGGASSSFSVVPSSYPAGLTGGVTIFVALYDYEARTTEDLSFKKGERFQIINNTEGDWWEARSIATGKNGYIPSNYVAPADSIQAEEWYFGKMGRKDAERLLLNPGNQRGIFLVRESETTKGAYSLSIRDWDEIRGDNVKHYKIRKLDNGGYYITTRAQFDTLQKLVKHYTEHADGLCHKLTTVCPTVKPQTQGLAKDAWEIPRESLRLEVKLGQGCFGEVWMGTWNGTTKVAIKTLKPGTMMPEAFLQEAQIMKKLRHDKLVPLYAVVSEEPIYIVTEFMSKGSLLDFLKEGDGKYLKLPQLVDMAAQIADGMAYIERMNYIHRDLRAANILVGENLVCKIADFGLARLIEDNEYTARQGAKFPIKWTAPEAALYGRFTIKSDVWSFGILQTELVTKGRVPYPGMVNREVLEQVERGYRMPCPQGCPESLHELMNLCWKKDPDERPTFEYIQSFLEDYFTATEPQYQPGENL</sequence>
<comment type="function">
    <text evidence="9 11 12 16 17 19">Non-receptor protein tyrosine kinase that is involved in the regulation of cell growth and survival, apoptosis, cell-cell adhesion, cytoskeleton remodeling, and differentiation. Stimulation by receptor tyrosine kinases (RTKs) including EGFR, PDGFR, CSF1R and FGFR leads to recruitment of YES1 to the phosphorylated receptor, and activation and phosphorylation of downstream substrates. Upon EGFR activation, promotes the phosphorylation of PARD3 to favor epithelial tight junction assembly. Participates in the phosphorylation of specific junctional components such as CTNND1 by stimulating the FYN and FER tyrosine kinases at cell-cell contacts. Upon T-cell stimulation by CXCL12, phosphorylates collapsin response mediator protein 2/DPYSL2 and induces T-cell migration. Participates in CD95L/FASLG signaling pathway and mediates AKT-mediated cell migration. Plays a role in cell cycle progression by phosphorylating the cyclin-dependent kinase 4/CDK4 thus regulating the G1 phase. Also involved in G2/M progression and cytokinesis. Catalyzes phosphorylation of organic cation transporter OCT2 which induces its transport activity (PubMed:26979622).</text>
</comment>
<comment type="catalytic activity">
    <reaction evidence="7">
        <text>L-tyrosyl-[protein] + ATP = O-phospho-L-tyrosyl-[protein] + ADP + H(+)</text>
        <dbReference type="Rhea" id="RHEA:10596"/>
        <dbReference type="Rhea" id="RHEA-COMP:10136"/>
        <dbReference type="Rhea" id="RHEA-COMP:20101"/>
        <dbReference type="ChEBI" id="CHEBI:15378"/>
        <dbReference type="ChEBI" id="CHEBI:30616"/>
        <dbReference type="ChEBI" id="CHEBI:46858"/>
        <dbReference type="ChEBI" id="CHEBI:61978"/>
        <dbReference type="ChEBI" id="CHEBI:456216"/>
        <dbReference type="EC" id="2.7.10.2"/>
    </reaction>
</comment>
<comment type="subunit">
    <text evidence="1 13 18 20">Interacts with YAP1 and CSF1R (By similarity). Interacts with CTNND1; this interaction allows YES1-mediated activation of FYN and FER and subsequent phosphorylation of CTNND1 (By similarity). Interacts with FASLG. Interacts with IL6ST/gp130 (PubMed:25731159). Interacts with SCRIB, when YES1 is in a closed conformation; the interaction facilitates YES1 autophosphorylation (PubMed:33730553).</text>
</comment>
<comment type="interaction">
    <interactant intactId="EBI-515331">
        <id>P07947</id>
    </interactant>
    <interactant intactId="EBI-1536151">
        <id>O14672</id>
        <label>ADAM10</label>
    </interactant>
    <organismsDiffer>false</organismsDiffer>
    <experiments>2</experiments>
</comment>
<comment type="interaction">
    <interactant intactId="EBI-515331">
        <id>P07947</id>
    </interactant>
    <interactant intactId="EBI-79934">
        <id>P09917</id>
        <label>ALOX5</label>
    </interactant>
    <organismsDiffer>false</organismsDiffer>
    <experiments>2</experiments>
</comment>
<comment type="interaction">
    <interactant intactId="EBI-515331">
        <id>P07947</id>
    </interactant>
    <interactant intactId="EBI-746752">
        <id>Q9Y2J4</id>
        <label>AMOTL2</label>
    </interactant>
    <organismsDiffer>false</organismsDiffer>
    <experiments>3</experiments>
</comment>
<comment type="interaction">
    <interactant intactId="EBI-515331">
        <id>P07947</id>
    </interactant>
    <interactant intactId="EBI-608057">
        <id>P10275</id>
        <label>AR</label>
    </interactant>
    <organismsDiffer>false</organismsDiffer>
    <experiments>5</experiments>
</comment>
<comment type="interaction">
    <interactant intactId="EBI-515331">
        <id>P07947</id>
    </interactant>
    <interactant intactId="EBI-702093">
        <id>P56945</id>
        <label>BCAR1</label>
    </interactant>
    <organismsDiffer>false</organismsDiffer>
    <experiments>3</experiments>
</comment>
<comment type="interaction">
    <interactant intactId="EBI-515331">
        <id>P07947</id>
    </interactant>
    <interactant intactId="EBI-11975051">
        <id>Q8TD16-2</id>
        <label>BICD2</label>
    </interactant>
    <organismsDiffer>false</organismsDiffer>
    <experiments>3</experiments>
</comment>
<comment type="interaction">
    <interactant intactId="EBI-515331">
        <id>P07947</id>
    </interactant>
    <interactant intactId="EBI-946029">
        <id>Q6P1W5</id>
        <label>C1orf94</label>
    </interactant>
    <organismsDiffer>false</organismsDiffer>
    <experiments>3</experiments>
</comment>
<comment type="interaction">
    <interactant intactId="EBI-515331">
        <id>P07947</id>
    </interactant>
    <interactant intactId="EBI-11530605">
        <id>Q9H257-2</id>
        <label>CARD9</label>
    </interactant>
    <organismsDiffer>false</organismsDiffer>
    <experiments>3</experiments>
</comment>
<comment type="interaction">
    <interactant intactId="EBI-515331">
        <id>P07947</id>
    </interactant>
    <interactant intactId="EBI-744027">
        <id>Q13191</id>
        <label>CBLB</label>
    </interactant>
    <organismsDiffer>false</organismsDiffer>
    <experiments>3</experiments>
</comment>
<comment type="interaction">
    <interactant intactId="EBI-515331">
        <id>P07947</id>
    </interactant>
    <interactant intactId="EBI-2341018">
        <id>Q9ULV8</id>
        <label>CBLC</label>
    </interactant>
    <organismsDiffer>false</organismsDiffer>
    <experiments>3</experiments>
</comment>
<comment type="interaction">
    <interactant intactId="EBI-515331">
        <id>P07947</id>
    </interactant>
    <interactant intactId="EBI-295634">
        <id>Q16543</id>
        <label>CDC37</label>
    </interactant>
    <organismsDiffer>false</organismsDiffer>
    <experiments>6</experiments>
</comment>
<comment type="interaction">
    <interactant intactId="EBI-515331">
        <id>P07947</id>
    </interactant>
    <interactant intactId="EBI-1019736">
        <id>Q9H5V8</id>
        <label>CDCP1</label>
    </interactant>
    <organismsDiffer>false</organismsDiffer>
    <experiments>2</experiments>
</comment>
<comment type="interaction">
    <interactant intactId="EBI-515331">
        <id>P07947</id>
    </interactant>
    <interactant intactId="EBI-1104570">
        <id>Q8IYX8</id>
        <label>CEP57L1</label>
    </interactant>
    <organismsDiffer>false</organismsDiffer>
    <experiments>3</experiments>
</comment>
<comment type="interaction">
    <interactant intactId="EBI-515331">
        <id>P07947</id>
    </interactant>
    <interactant intactId="EBI-11123098">
        <id>Q9Y592-2</id>
        <label>CEP83</label>
    </interactant>
    <organismsDiffer>false</organismsDiffer>
    <experiments>3</experiments>
</comment>
<comment type="interaction">
    <interactant intactId="EBI-515331">
        <id>P07947</id>
    </interactant>
    <interactant intactId="EBI-1057156">
        <id>Q9HD42</id>
        <label>CHMP1A</label>
    </interactant>
    <organismsDiffer>false</organismsDiffer>
    <experiments>3</experiments>
</comment>
<comment type="interaction">
    <interactant intactId="EBI-515331">
        <id>P07947</id>
    </interactant>
    <interactant intactId="EBI-11088043">
        <id>Q16630-2</id>
        <label>CPSF6</label>
    </interactant>
    <organismsDiffer>false</organismsDiffer>
    <experiments>3</experiments>
</comment>
<comment type="interaction">
    <interactant intactId="EBI-515331">
        <id>P07947</id>
    </interactant>
    <interactant intactId="EBI-910">
        <id>P46109</id>
        <label>CRKL</label>
    </interactant>
    <organismsDiffer>false</organismsDiffer>
    <experiments>3</experiments>
</comment>
<comment type="interaction">
    <interactant intactId="EBI-515331">
        <id>P07947</id>
    </interactant>
    <interactant intactId="EBI-3867333">
        <id>A8MQ03</id>
        <label>CYSRT1</label>
    </interactant>
    <organismsDiffer>false</organismsDiffer>
    <experiments>3</experiments>
</comment>
<comment type="interaction">
    <interactant intactId="EBI-515331">
        <id>P07947</id>
    </interactant>
    <interactant intactId="EBI-742054">
        <id>Q96D03</id>
        <label>DDIT4L</label>
    </interactant>
    <organismsDiffer>false</organismsDiffer>
    <experiments>3</experiments>
</comment>
<comment type="interaction">
    <interactant intactId="EBI-515331">
        <id>P07947</id>
    </interactant>
    <interactant intactId="EBI-13075846">
        <id>Q68D51-2</id>
        <label>DENND2C</label>
    </interactant>
    <organismsDiffer>false</organismsDiffer>
    <experiments>3</experiments>
</comment>
<comment type="interaction">
    <interactant intactId="EBI-515331">
        <id>P07947</id>
    </interactant>
    <interactant intactId="EBI-1055572">
        <id>P17661</id>
        <label>DES</label>
    </interactant>
    <organismsDiffer>false</organismsDiffer>
    <experiments>3</experiments>
</comment>
<comment type="interaction">
    <interactant intactId="EBI-515331">
        <id>P07947</id>
    </interactant>
    <interactant intactId="EBI-1046024">
        <id>O60496</id>
        <label>DOK2</label>
    </interactant>
    <organismsDiffer>false</organismsDiffer>
    <experiments>3</experiments>
</comment>
<comment type="interaction">
    <interactant intactId="EBI-515331">
        <id>P07947</id>
    </interactant>
    <interactant intactId="EBI-2340258">
        <id>Q8N9I9</id>
        <label>DTX3</label>
    </interactant>
    <organismsDiffer>false</organismsDiffer>
    <experiments>3</experiments>
</comment>
<comment type="interaction">
    <interactant intactId="EBI-515331">
        <id>P07947</id>
    </interactant>
    <interactant intactId="EBI-11525448">
        <id>O43281-2</id>
        <label>EFS</label>
    </interactant>
    <organismsDiffer>false</organismsDiffer>
    <experiments>5</experiments>
</comment>
<comment type="interaction">
    <interactant intactId="EBI-515331">
        <id>P07947</id>
    </interactant>
    <interactant intactId="EBI-297353">
        <id>P00533</id>
        <label>EGFR</label>
    </interactant>
    <organismsDiffer>false</organismsDiffer>
    <experiments>3</experiments>
</comment>
<comment type="interaction">
    <interactant intactId="EBI-515331">
        <id>P07947</id>
    </interactant>
    <interactant intactId="EBI-15749113">
        <id>P25445-1</id>
        <label>FAS</label>
    </interactant>
    <organismsDiffer>false</organismsDiffer>
    <experiments>2</experiments>
</comment>
<comment type="interaction">
    <interactant intactId="EBI-515331">
        <id>P07947</id>
    </interactant>
    <interactant intactId="EBI-11533409">
        <id>Q96Q35-2</id>
        <label>FLACC1</label>
    </interactant>
    <organismsDiffer>false</organismsDiffer>
    <experiments>3</experiments>
</comment>
<comment type="interaction">
    <interactant intactId="EBI-515331">
        <id>P07947</id>
    </interactant>
    <interactant intactId="EBI-3059266">
        <id>Q8IVP5</id>
        <label>FUNDC1</label>
    </interactant>
    <organismsDiffer>false</organismsDiffer>
    <experiments>4</experiments>
</comment>
<comment type="interaction">
    <interactant intactId="EBI-515331">
        <id>P07947</id>
    </interactant>
    <interactant intactId="EBI-11022345">
        <id>P51114-2</id>
        <label>FXR1</label>
    </interactant>
    <organismsDiffer>false</organismsDiffer>
    <experiments>3</experiments>
</comment>
<comment type="interaction">
    <interactant intactId="EBI-515331">
        <id>P07947</id>
    </interactant>
    <interactant intactId="EBI-740459">
        <id>P51116</id>
        <label>FXR2</label>
    </interactant>
    <organismsDiffer>false</organismsDiffer>
    <experiments>6</experiments>
</comment>
<comment type="interaction">
    <interactant intactId="EBI-515331">
        <id>P07947</id>
    </interactant>
    <interactant intactId="EBI-517684">
        <id>Q13480</id>
        <label>GAB1</label>
    </interactant>
    <organismsDiffer>false</organismsDiffer>
    <experiments>7</experiments>
</comment>
<comment type="interaction">
    <interactant intactId="EBI-515331">
        <id>P07947</id>
    </interactant>
    <interactant intactId="EBI-1052570">
        <id>O95995</id>
        <label>GAS8</label>
    </interactant>
    <organismsDiffer>false</organismsDiffer>
    <experiments>3</experiments>
</comment>
<comment type="interaction">
    <interactant intactId="EBI-515331">
        <id>P07947</id>
    </interactant>
    <interactant intactId="EBI-744302">
        <id>P14136</id>
        <label>GFAP</label>
    </interactant>
    <organismsDiffer>false</organismsDiffer>
    <experiments>3</experiments>
</comment>
<comment type="interaction">
    <interactant intactId="EBI-515331">
        <id>P07947</id>
    </interactant>
    <interactant intactId="EBI-352572">
        <id>P08238</id>
        <label>HSP90AB1</label>
    </interactant>
    <organismsDiffer>false</organismsDiffer>
    <experiments>3</experiments>
</comment>
<comment type="interaction">
    <interactant intactId="EBI-515331">
        <id>P07947</id>
    </interactant>
    <interactant intactId="EBI-747204">
        <id>Q9UKT9</id>
        <label>IKZF3</label>
    </interactant>
    <organismsDiffer>false</organismsDiffer>
    <experiments>5</experiments>
</comment>
<comment type="interaction">
    <interactant intactId="EBI-515331">
        <id>P07947</id>
    </interactant>
    <interactant intactId="EBI-2680803">
        <id>Q96N16</id>
        <label>JAKMIP1</label>
    </interactant>
    <organismsDiffer>false</organismsDiffer>
    <experiments>3</experiments>
</comment>
<comment type="interaction">
    <interactant intactId="EBI-515331">
        <id>P07947</id>
    </interactant>
    <interactant intactId="EBI-1379503">
        <id>P10721</id>
        <label>KIT</label>
    </interactant>
    <organismsDiffer>false</organismsDiffer>
    <experiments>7</experiments>
</comment>
<comment type="interaction">
    <interactant intactId="EBI-515331">
        <id>P07947</id>
    </interactant>
    <interactant intactId="EBI-9088686">
        <id>Q14847-2</id>
        <label>LASP1</label>
    </interactant>
    <organismsDiffer>false</organismsDiffer>
    <experiments>3</experiments>
</comment>
<comment type="interaction">
    <interactant intactId="EBI-515331">
        <id>P07947</id>
    </interactant>
    <interactant intactId="EBI-1171517">
        <id>Q9NUP9</id>
        <label>LIN7C</label>
    </interactant>
    <organismsDiffer>false</organismsDiffer>
    <experiments>3</experiments>
</comment>
<comment type="interaction">
    <interactant intactId="EBI-515331">
        <id>P07947</id>
    </interactant>
    <interactant intactId="EBI-514199">
        <id>Q9H204</id>
        <label>MED28</label>
    </interactant>
    <organismsDiffer>false</organismsDiffer>
    <experiments>2</experiments>
</comment>
<comment type="interaction">
    <interactant intactId="EBI-515331">
        <id>P07947</id>
    </interactant>
    <interactant intactId="EBI-1039152">
        <id>P08581</id>
        <label>MET</label>
    </interactant>
    <organismsDiffer>false</organismsDiffer>
    <experiments>3</experiments>
</comment>
<comment type="interaction">
    <interactant intactId="EBI-515331">
        <id>P07947</id>
    </interactant>
    <interactant intactId="EBI-740897">
        <id>Q9GZT8</id>
        <label>NIF3L1</label>
    </interactant>
    <organismsDiffer>false</organismsDiffer>
    <experiments>3</experiments>
</comment>
<comment type="interaction">
    <interactant intactId="EBI-515331">
        <id>P07947</id>
    </interactant>
    <interactant intactId="EBI-3867416">
        <id>Q8TAK6</id>
        <label>OLIG1</label>
    </interactant>
    <organismsDiffer>false</organismsDiffer>
    <experiments>3</experiments>
</comment>
<comment type="interaction">
    <interactant intactId="EBI-515331">
        <id>P07947</id>
    </interactant>
    <interactant intactId="EBI-79165">
        <id>Q9NRD5</id>
        <label>PICK1</label>
    </interactant>
    <organismsDiffer>false</organismsDiffer>
    <experiments>3</experiments>
</comment>
<comment type="interaction">
    <interactant intactId="EBI-515331">
        <id>P07947</id>
    </interactant>
    <interactant intactId="EBI-79893">
        <id>Q92569</id>
        <label>PIK3R3</label>
    </interactant>
    <organismsDiffer>false</organismsDiffer>
    <experiments>3</experiments>
</comment>
<comment type="interaction">
    <interactant intactId="EBI-515331">
        <id>P07947</id>
    </interactant>
    <interactant intactId="EBI-10181089">
        <id>I6L996</id>
        <label>PTK2</label>
    </interactant>
    <organismsDiffer>false</organismsDiffer>
    <experiments>6</experiments>
</comment>
<comment type="interaction">
    <interactant intactId="EBI-515331">
        <id>P07947</id>
    </interactant>
    <interactant intactId="EBI-11954250">
        <id>P49023-2</id>
        <label>PXN</label>
    </interactant>
    <organismsDiffer>false</organismsDiffer>
    <experiments>3</experiments>
</comment>
<comment type="interaction">
    <interactant intactId="EBI-515331">
        <id>P07947</id>
    </interactant>
    <interactant intactId="EBI-2462271">
        <id>Q15428</id>
        <label>SF3A2</label>
    </interactant>
    <organismsDiffer>false</organismsDiffer>
    <experiments>3</experiments>
</comment>
<comment type="interaction">
    <interactant intactId="EBI-515331">
        <id>P07947</id>
    </interactant>
    <interactant intactId="EBI-749607">
        <id>Q9NR46</id>
        <label>SH3GLB2</label>
    </interactant>
    <organismsDiffer>false</organismsDiffer>
    <experiments>3</experiments>
</comment>
<comment type="interaction">
    <interactant intactId="EBI-515331">
        <id>P07947</id>
    </interactant>
    <interactant intactId="EBI-617737">
        <id>O14508</id>
        <label>SOCS2</label>
    </interactant>
    <organismsDiffer>false</organismsDiffer>
    <experiments>3</experiments>
</comment>
<comment type="interaction">
    <interactant intactId="EBI-515331">
        <id>P07947</id>
    </interactant>
    <interactant intactId="EBI-714146">
        <id>O14543</id>
        <label>SOCS3</label>
    </interactant>
    <organismsDiffer>false</organismsDiffer>
    <experiments>6</experiments>
</comment>
<comment type="interaction">
    <interactant intactId="EBI-515331">
        <id>P07947</id>
    </interactant>
    <interactant intactId="EBI-1539606">
        <id>O14512</id>
        <label>SOCS7</label>
    </interactant>
    <organismsDiffer>false</organismsDiffer>
    <experiments>3</experiments>
</comment>
<comment type="interaction">
    <interactant intactId="EBI-515331">
        <id>P07947</id>
    </interactant>
    <interactant intactId="EBI-2902395">
        <id>Q9BWW4</id>
        <label>SSBP3</label>
    </interactant>
    <organismsDiffer>false</organismsDiffer>
    <experiments>6</experiments>
</comment>
<comment type="interaction">
    <interactant intactId="EBI-515331">
        <id>P07947</id>
    </interactant>
    <interactant intactId="EBI-1553984">
        <id>Q9UGK3</id>
        <label>STAP2</label>
    </interactant>
    <organismsDiffer>false</organismsDiffer>
    <experiments>3</experiments>
</comment>
<comment type="interaction">
    <interactant intactId="EBI-515331">
        <id>P07947</id>
    </interactant>
    <interactant intactId="EBI-741515">
        <id>Q9NVV9</id>
        <label>THAP1</label>
    </interactant>
    <organismsDiffer>false</organismsDiffer>
    <experiments>6</experiments>
</comment>
<comment type="interaction">
    <interactant intactId="EBI-515331">
        <id>P07947</id>
    </interactant>
    <interactant intactId="EBI-355744">
        <id>Q12933</id>
        <label>TRAF2</label>
    </interactant>
    <organismsDiffer>false</organismsDiffer>
    <experiments>6</experiments>
</comment>
<comment type="interaction">
    <interactant intactId="EBI-515331">
        <id>P07947</id>
    </interactant>
    <interactant intactId="EBI-359276">
        <id>Q9Y4K3</id>
        <label>TRAF6</label>
    </interactant>
    <organismsDiffer>false</organismsDiffer>
    <experiments>6</experiments>
</comment>
<comment type="interaction">
    <interactant intactId="EBI-515331">
        <id>P07947</id>
    </interactant>
    <interactant intactId="EBI-12840050">
        <id>Q9C035-3</id>
        <label>TRIM5</label>
    </interactant>
    <organismsDiffer>false</organismsDiffer>
    <experiments>3</experiments>
</comment>
<comment type="interaction">
    <interactant intactId="EBI-515331">
        <id>P07947</id>
    </interactant>
    <interactant intactId="EBI-10241197">
        <id>Q3SY00</id>
        <label>TSGA10IP</label>
    </interactant>
    <organismsDiffer>false</organismsDiffer>
    <experiments>3</experiments>
</comment>
<comment type="interaction">
    <interactant intactId="EBI-515331">
        <id>P07947</id>
    </interactant>
    <interactant intactId="EBI-742740">
        <id>Q96BR9</id>
        <label>ZBTB8A</label>
    </interactant>
    <organismsDiffer>false</organismsDiffer>
    <experiments>6</experiments>
</comment>
<comment type="interaction">
    <interactant intactId="EBI-515331">
        <id>P07947</id>
    </interactant>
    <interactant intactId="EBI-5458880">
        <id>Q96GY0</id>
        <label>ZC2HC1A</label>
    </interactant>
    <organismsDiffer>false</organismsDiffer>
    <experiments>3</experiments>
</comment>
<comment type="interaction">
    <interactant intactId="EBI-515331">
        <id>P07947</id>
    </interactant>
    <interactant intactId="EBI-11962468">
        <id>Q7Z4V0</id>
        <label>ZNF438</label>
    </interactant>
    <organismsDiffer>false</organismsDiffer>
    <experiments>3</experiments>
</comment>
<comment type="subcellular location">
    <subcellularLocation>
        <location>Cell membrane</location>
    </subcellularLocation>
    <subcellularLocation>
        <location>Cytoplasm</location>
        <location>Cytoskeleton</location>
        <location>Microtubule organizing center</location>
        <location>Centrosome</location>
    </subcellularLocation>
    <subcellularLocation>
        <location>Cytoplasm</location>
        <location>Cytosol</location>
    </subcellularLocation>
    <subcellularLocation>
        <location evidence="3">Cell junction</location>
    </subcellularLocation>
    <text evidence="3">Newly synthesized protein initially accumulates in the Golgi region and traffics to the plasma membrane through the exocytic pathway. Localized to small puncta throughout the cytoplasm and cell membrane when in the presence of SNAIL1 (By similarity).</text>
</comment>
<comment type="tissue specificity">
    <text evidence="14 15">Expressed in the epithelial cells of renal proximal tubules and stomach as well as hematopoietic cells in the bone marrow and spleen in the fetal tissues. In adult, expressed in epithelial cells of the renal proximal tubules and present in keratinocytes in the basal epidermal layer of epidermis.</text>
</comment>
<comment type="PTM">
    <text evidence="9 21 22">Phosphorylated (PubMed:11901164). Phosphorylation by CSK on the C-terminal tail maintains the enzyme in an inactive state. Autophosphorylation at Tyr-426 maintains enzyme activity by blocking CSK-mediated inhibition.</text>
</comment>
<comment type="PTM">
    <text evidence="1">Palmitoylation at Cys-3 promotes membrane localization.</text>
</comment>
<comment type="similarity">
    <text evidence="4">Belongs to the protein kinase superfamily. Tyr protein kinase family. SRC subfamily.</text>
</comment>
<gene>
    <name type="primary">YES1</name>
    <name type="synonym">YES</name>
</gene>
<name>YES_HUMAN</name>
<proteinExistence type="evidence at protein level"/>
<accession>P07947</accession>
<accession>A6NLB3</accession>
<accession>D3DUH1</accession>
<protein>
    <recommendedName>
        <fullName>Tyrosine-protein kinase Yes</fullName>
        <ecNumber>2.7.10.2</ecNumber>
    </recommendedName>
    <alternativeName>
        <fullName>Proto-oncogene c-Yes</fullName>
    </alternativeName>
    <alternativeName>
        <fullName>p61-Yes</fullName>
    </alternativeName>
</protein>
<reference key="1">
    <citation type="journal article" date="1987" name="Mol. Cell. Biol.">
        <title>Characterization of cDNA clones for the human c-yes gene.</title>
        <authorList>
            <person name="Sukegawa J."/>
            <person name="Semba K."/>
            <person name="Yamanashi Y."/>
            <person name="Nishizawa M."/>
            <person name="Miyajima N."/>
            <person name="Yamamoto T."/>
            <person name="Toyoshima K."/>
        </authorList>
    </citation>
    <scope>NUCLEOTIDE SEQUENCE [MRNA]</scope>
</reference>
<reference key="2">
    <citation type="journal article" date="2005" name="Nature">
        <title>DNA sequence and analysis of human chromosome 18.</title>
        <authorList>
            <person name="Nusbaum C."/>
            <person name="Zody M.C."/>
            <person name="Borowsky M.L."/>
            <person name="Kamal M."/>
            <person name="Kodira C.D."/>
            <person name="Taylor T.D."/>
            <person name="Whittaker C.A."/>
            <person name="Chang J.L."/>
            <person name="Cuomo C.A."/>
            <person name="Dewar K."/>
            <person name="FitzGerald M.G."/>
            <person name="Yang X."/>
            <person name="Abouelleil A."/>
            <person name="Allen N.R."/>
            <person name="Anderson S."/>
            <person name="Bloom T."/>
            <person name="Bugalter B."/>
            <person name="Butler J."/>
            <person name="Cook A."/>
            <person name="DeCaprio D."/>
            <person name="Engels R."/>
            <person name="Garber M."/>
            <person name="Gnirke A."/>
            <person name="Hafez N."/>
            <person name="Hall J.L."/>
            <person name="Norman C.H."/>
            <person name="Itoh T."/>
            <person name="Jaffe D.B."/>
            <person name="Kuroki Y."/>
            <person name="Lehoczky J."/>
            <person name="Lui A."/>
            <person name="Macdonald P."/>
            <person name="Mauceli E."/>
            <person name="Mikkelsen T.S."/>
            <person name="Naylor J.W."/>
            <person name="Nicol R."/>
            <person name="Nguyen C."/>
            <person name="Noguchi H."/>
            <person name="O'Leary S.B."/>
            <person name="Piqani B."/>
            <person name="Smith C.L."/>
            <person name="Talamas J.A."/>
            <person name="Topham K."/>
            <person name="Totoki Y."/>
            <person name="Toyoda A."/>
            <person name="Wain H.M."/>
            <person name="Young S.K."/>
            <person name="Zeng Q."/>
            <person name="Zimmer A.R."/>
            <person name="Fujiyama A."/>
            <person name="Hattori M."/>
            <person name="Birren B.W."/>
            <person name="Sakaki Y."/>
            <person name="Lander E.S."/>
        </authorList>
    </citation>
    <scope>NUCLEOTIDE SEQUENCE [LARGE SCALE GENOMIC DNA]</scope>
</reference>
<reference key="3">
    <citation type="submission" date="2005-09" db="EMBL/GenBank/DDBJ databases">
        <authorList>
            <person name="Mural R.J."/>
            <person name="Istrail S."/>
            <person name="Sutton G.G."/>
            <person name="Florea L."/>
            <person name="Halpern A.L."/>
            <person name="Mobarry C.M."/>
            <person name="Lippert R."/>
            <person name="Walenz B."/>
            <person name="Shatkay H."/>
            <person name="Dew I."/>
            <person name="Miller J.R."/>
            <person name="Flanigan M.J."/>
            <person name="Edwards N.J."/>
            <person name="Bolanos R."/>
            <person name="Fasulo D."/>
            <person name="Halldorsson B.V."/>
            <person name="Hannenhalli S."/>
            <person name="Turner R."/>
            <person name="Yooseph S."/>
            <person name="Lu F."/>
            <person name="Nusskern D.R."/>
            <person name="Shue B.C."/>
            <person name="Zheng X.H."/>
            <person name="Zhong F."/>
            <person name="Delcher A.L."/>
            <person name="Huson D.H."/>
            <person name="Kravitz S.A."/>
            <person name="Mouchard L."/>
            <person name="Reinert K."/>
            <person name="Remington K.A."/>
            <person name="Clark A.G."/>
            <person name="Waterman M.S."/>
            <person name="Eichler E.E."/>
            <person name="Adams M.D."/>
            <person name="Hunkapiller M.W."/>
            <person name="Myers E.W."/>
            <person name="Venter J.C."/>
        </authorList>
    </citation>
    <scope>NUCLEOTIDE SEQUENCE [LARGE SCALE GENOMIC DNA]</scope>
</reference>
<reference key="4">
    <citation type="journal article" date="2004" name="Genome Res.">
        <title>The status, quality, and expansion of the NIH full-length cDNA project: the Mammalian Gene Collection (MGC).</title>
        <authorList>
            <consortium name="The MGC Project Team"/>
        </authorList>
    </citation>
    <scope>NUCLEOTIDE SEQUENCE [LARGE SCALE MRNA]</scope>
    <source>
        <tissue>Brain</tissue>
    </source>
</reference>
<reference key="5">
    <citation type="journal article" date="1991" name="Br. J. Cancer">
        <title>Distribution of c-yes-1 gene product in various cells and tissues.</title>
        <authorList>
            <person name="Sugawara K."/>
            <person name="Sugawara I."/>
            <person name="Sukegawa J."/>
            <person name="Akatsuka T."/>
            <person name="Yamamoto T."/>
            <person name="Morita M."/>
            <person name="Mori S."/>
            <person name="Toyoshima K."/>
        </authorList>
    </citation>
    <scope>TISSUE SPECIFICITY</scope>
</reference>
<reference key="6">
    <citation type="journal article" date="1991" name="Oncogene">
        <title>Differential expression of p62c-yes in normal, hyperplastic and neoplastic human epidermis.</title>
        <authorList>
            <person name="Krueger J."/>
            <person name="Zhao Y.H."/>
            <person name="Murphy D."/>
            <person name="Sudol M."/>
        </authorList>
    </citation>
    <scope>TISSUE SPECIFICITY</scope>
</reference>
<reference key="7">
    <citation type="journal article" date="1994" name="Biochem. J.">
        <title>Palmitoylation of multiple Src-family kinases at a homologous N-terminal motif.</title>
        <authorList>
            <person name="Koegl M."/>
            <person name="Zlatkine P."/>
            <person name="Ley S.C."/>
            <person name="Courtneidge S.A."/>
            <person name="Magee A.I."/>
        </authorList>
    </citation>
    <scope>PALMITOYLATION</scope>
</reference>
<reference key="8">
    <citation type="journal article" date="1997" name="Arch. Biochem. Biophys.">
        <title>Expression, purification, and initial characterization of human Yes protein tyrosine kinase from a bacterial expression system.</title>
        <authorList>
            <person name="Sun G."/>
            <person name="Budde R.J."/>
        </authorList>
    </citation>
    <scope>PHOSPHORYLATION BY CSK</scope>
</reference>
<reference key="9">
    <citation type="journal article" date="1998" name="Oncogene">
        <title>Autophosphorylation of Src and Yes blocks their inactivation by Csk phosphorylation.</title>
        <authorList>
            <person name="Sun G."/>
            <person name="Sharma A.K."/>
            <person name="Budde R.J."/>
        </authorList>
    </citation>
    <scope>PHOSPHORYLATION AT TYR-426</scope>
    <scope>MUTAGENESIS OF TYR-426</scope>
</reference>
<reference key="10">
    <citation type="journal article" date="2002" name="J. Cell Biol.">
        <title>CD46 is phosphorylated at tyrosine 354 upon infection of epithelial cells by Neisseria gonorrhoeae.</title>
        <authorList>
            <person name="Lee S.W."/>
            <person name="Bonnah R.A."/>
            <person name="Higashi D.L."/>
            <person name="Atkinson J.P."/>
            <person name="Milgram S.L."/>
            <person name="So M."/>
        </authorList>
    </citation>
    <scope>SUBCELLULAR LOCATION</scope>
    <scope>PHOSPHORYLATION</scope>
    <scope>FUNCTION</scope>
</reference>
<reference key="11">
    <citation type="journal article" date="2005" name="Growth Factors">
        <title>c-Yes response to growth factor activation.</title>
        <authorList>
            <person name="Clump D.A."/>
            <person name="Qazi I.H."/>
            <person name="Sudol M."/>
            <person name="Flynn D.C."/>
        </authorList>
    </citation>
    <scope>REVIEW ON FUNCTION</scope>
</reference>
<reference key="12">
    <citation type="journal article" date="2008" name="FEBS J.">
        <title>Phosphorylation of cyclin dependent kinase 4 on tyrosine 17 is mediated by Src family kinases.</title>
        <authorList>
            <person name="Martin N.G."/>
            <person name="McAndrew P.C."/>
            <person name="Eve P.D."/>
            <person name="Garrett M.D."/>
        </authorList>
    </citation>
    <scope>FUNCTION IN PHOSPHORYLATION OF CDK4</scope>
</reference>
<reference key="13">
    <citation type="journal article" date="2008" name="Mol. Cell">
        <title>Kinase-selective enrichment enables quantitative phosphoproteomics of the kinome across the cell cycle.</title>
        <authorList>
            <person name="Daub H."/>
            <person name="Olsen J.V."/>
            <person name="Bairlein M."/>
            <person name="Gnad F."/>
            <person name="Oppermann F.S."/>
            <person name="Korner R."/>
            <person name="Greff Z."/>
            <person name="Keri G."/>
            <person name="Stemmann O."/>
            <person name="Mann M."/>
        </authorList>
    </citation>
    <scope>PHOSPHORYLATION [LARGE SCALE ANALYSIS] AT TYR-537</scope>
    <scope>IDENTIFICATION BY MASS SPECTROMETRY [LARGE SCALE ANALYSIS]</scope>
    <source>
        <tissue>Cervix carcinoma</tissue>
    </source>
</reference>
<reference key="14">
    <citation type="journal article" date="2008" name="Proc. Natl. Acad. Sci. U.S.A.">
        <title>A quantitative atlas of mitotic phosphorylation.</title>
        <authorList>
            <person name="Dephoure N."/>
            <person name="Zhou C."/>
            <person name="Villen J."/>
            <person name="Beausoleil S.A."/>
            <person name="Bakalarski C.E."/>
            <person name="Elledge S.J."/>
            <person name="Gygi S.P."/>
        </authorList>
    </citation>
    <scope>PHOSPHORYLATION [LARGE SCALE ANALYSIS] AT THR-21 AND SER-40</scope>
    <scope>IDENTIFICATION BY MASS SPECTROMETRY [LARGE SCALE ANALYSIS]</scope>
    <source>
        <tissue>Cervix carcinoma</tissue>
    </source>
</reference>
<reference key="15">
    <citation type="journal article" date="2009" name="BMC Immunol.">
        <title>Identification of SH3 domain interaction partners of human FasL (CD178) by phage display screening.</title>
        <authorList>
            <person name="Voss M."/>
            <person name="Lettau M."/>
            <person name="Janssen O."/>
        </authorList>
    </citation>
    <scope>INTERACTION WITH FASLG</scope>
</reference>
<reference key="16">
    <citation type="journal article" date="2009" name="J. Biol. Chem.">
        <title>Phosphorylation of collapsin response mediator protein 2 on Tyr-479 regulates CXCL12-induced T lymphocyte migration.</title>
        <authorList>
            <person name="Varrin-Doyer M."/>
            <person name="Vincent P."/>
            <person name="Cavagna S."/>
            <person name="Auvergnon N."/>
            <person name="Noraz N."/>
            <person name="Rogemond V."/>
            <person name="Honnorat J."/>
            <person name="Moradi-Ameli M."/>
            <person name="Giraudon P."/>
        </authorList>
    </citation>
    <scope>FUNCTION IN PHOSPHORYLATION OF DPYSL2</scope>
</reference>
<reference key="17">
    <citation type="journal article" date="2009" name="J. Cell Sci.">
        <title>Differential trafficking of Src, Lyn, Yes and Fyn is specified by the state of palmitoylation in the SH4 domain.</title>
        <authorList>
            <person name="Sato I."/>
            <person name="Obata Y."/>
            <person name="Kasahara K."/>
            <person name="Nakayama Y."/>
            <person name="Fukumoto Y."/>
            <person name="Yamasaki T."/>
            <person name="Yokoyama K.K."/>
            <person name="Saito T."/>
            <person name="Yamaguchi N."/>
        </authorList>
    </citation>
    <scope>SUBCELLULAR LOCATION</scope>
</reference>
<reference key="18">
    <citation type="journal article" date="2009" name="Mol. Cell. Proteomics">
        <title>Large-scale proteomics analysis of the human kinome.</title>
        <authorList>
            <person name="Oppermann F.S."/>
            <person name="Gnad F."/>
            <person name="Olsen J.V."/>
            <person name="Hornberger R."/>
            <person name="Greff Z."/>
            <person name="Keri G."/>
            <person name="Mann M."/>
            <person name="Daub H."/>
        </authorList>
    </citation>
    <scope>PHOSPHORYLATION [LARGE SCALE ANALYSIS] AT TYR-336; TYR-345 AND TYR-537</scope>
    <scope>IDENTIFICATION BY MASS SPECTROMETRY [LARGE SCALE ANALYSIS]</scope>
</reference>
<reference key="19">
    <citation type="journal article" date="2011" name="Cell Cycle">
        <title>Clues for c-Yes involvement in the cell cycle and cytokinesis.</title>
        <authorList>
            <person name="Jung J."/>
            <person name="Lee M.K."/>
            <person name="Jin Y."/>
            <person name="Fu S.B."/>
            <person name="Rosales J.L."/>
            <person name="Lee K.Y."/>
        </authorList>
    </citation>
    <scope>FUNCTION</scope>
    <scope>SUBCELLULAR LOCATION</scope>
</reference>
<reference key="20">
    <citation type="journal article" date="2011" name="PLoS Biol.">
        <title>The naturally processed CD95L elicits a c-yes/calcium/PI3K-driven cell migration pathway.</title>
        <authorList>
            <person name="Tauzin S."/>
            <person name="Chaigne-Delalande B."/>
            <person name="Selva E."/>
            <person name="Khadra N."/>
            <person name="Daburon S."/>
            <person name="Contin-Bordes C."/>
            <person name="Blanco P."/>
            <person name="Le Seyec J."/>
            <person name="Ducret T."/>
            <person name="Counillon L."/>
            <person name="Moreau J.F."/>
            <person name="Hofman P."/>
            <person name="Vacher P."/>
            <person name="Legembre P."/>
        </authorList>
    </citation>
    <scope>FUNCTION</scope>
</reference>
<reference key="21">
    <citation type="journal article" date="2015" name="Nature">
        <title>A gp130-Src-YAP module links inflammation to epithelial regeneration.</title>
        <authorList>
            <person name="Taniguchi K."/>
            <person name="Wu L.W."/>
            <person name="Grivennikov S.I."/>
            <person name="de Jong P.R."/>
            <person name="Lian I."/>
            <person name="Yu F.X."/>
            <person name="Wang K."/>
            <person name="Ho S.B."/>
            <person name="Boland B.S."/>
            <person name="Chang J.T."/>
            <person name="Sandborn W.J."/>
            <person name="Hardiman G."/>
            <person name="Raz E."/>
            <person name="Maehara Y."/>
            <person name="Yoshimura A."/>
            <person name="Zucman-Rossi J."/>
            <person name="Guan K.L."/>
            <person name="Karin M."/>
        </authorList>
    </citation>
    <scope>INTERACTION WITH IL6ST</scope>
</reference>
<reference key="22">
    <citation type="journal article" date="2016" name="Nat. Commun.">
        <title>A phosphotyrosine switch regulates organic cation transporters.</title>
        <authorList>
            <person name="Sprowl J.A."/>
            <person name="Ong S.S."/>
            <person name="Gibson A.A."/>
            <person name="Hu S."/>
            <person name="Du G."/>
            <person name="Lin W."/>
            <person name="Li L."/>
            <person name="Bharill S."/>
            <person name="Ness R.A."/>
            <person name="Stecula A."/>
            <person name="Offer S.M."/>
            <person name="Diasio R.B."/>
            <person name="Nies A.T."/>
            <person name="Schwab M."/>
            <person name="Cavaletti G."/>
            <person name="Schlatter E."/>
            <person name="Ciarimboli G."/>
            <person name="Schellens J.H.M."/>
            <person name="Isacoff E.Y."/>
            <person name="Sali A."/>
            <person name="Chen T."/>
            <person name="Baker S.D."/>
            <person name="Sparreboom A."/>
            <person name="Pabla N."/>
        </authorList>
    </citation>
    <scope>FUNCTION</scope>
</reference>
<reference key="23">
    <citation type="journal article" date="2021" name="Cell Chem. Biol.">
        <title>Scribble sub-cellular localization modulates recruitment of YES1 to regulate YAP1 phosphorylation.</title>
        <authorList>
            <person name="Zhao D."/>
            <person name="Yin Z."/>
            <person name="Soellner M.B."/>
            <person name="Martin B.R."/>
        </authorList>
    </citation>
    <scope>INTERACTION WITH SCRIB</scope>
</reference>
<reference key="24">
    <citation type="journal article" date="2007" name="FEBS Lett.">
        <title>Crystallographic structure of the SH3 domain of the human c-Yes tyrosine kinase: loop flexibility and amyloid aggregation.</title>
        <authorList>
            <person name="Martin-Garcia J.M."/>
            <person name="Luque I."/>
            <person name="Mateo P.L."/>
            <person name="Ruiz-Sanz J."/>
            <person name="Camara-Artigas A."/>
        </authorList>
    </citation>
    <scope>X-RAY CRYSTALLOGRAPHY (1.9 ANGSTROMS) OF 91-152</scope>
</reference>
<reference key="25">
    <citation type="journal article" date="2007" name="Nature">
        <title>Patterns of somatic mutation in human cancer genomes.</title>
        <authorList>
            <person name="Greenman C."/>
            <person name="Stephens P."/>
            <person name="Smith R."/>
            <person name="Dalgliesh G.L."/>
            <person name="Hunter C."/>
            <person name="Bignell G."/>
            <person name="Davies H."/>
            <person name="Teague J."/>
            <person name="Butler A."/>
            <person name="Stevens C."/>
            <person name="Edkins S."/>
            <person name="O'Meara S."/>
            <person name="Vastrik I."/>
            <person name="Schmidt E.E."/>
            <person name="Avis T."/>
            <person name="Barthorpe S."/>
            <person name="Bhamra G."/>
            <person name="Buck G."/>
            <person name="Choudhury B."/>
            <person name="Clements J."/>
            <person name="Cole J."/>
            <person name="Dicks E."/>
            <person name="Forbes S."/>
            <person name="Gray K."/>
            <person name="Halliday K."/>
            <person name="Harrison R."/>
            <person name="Hills K."/>
            <person name="Hinton J."/>
            <person name="Jenkinson A."/>
            <person name="Jones D."/>
            <person name="Menzies A."/>
            <person name="Mironenko T."/>
            <person name="Perry J."/>
            <person name="Raine K."/>
            <person name="Richardson D."/>
            <person name="Shepherd R."/>
            <person name="Small A."/>
            <person name="Tofts C."/>
            <person name="Varian J."/>
            <person name="Webb T."/>
            <person name="West S."/>
            <person name="Widaa S."/>
            <person name="Yates A."/>
            <person name="Cahill D.P."/>
            <person name="Louis D.N."/>
            <person name="Goldstraw P."/>
            <person name="Nicholson A.G."/>
            <person name="Brasseur F."/>
            <person name="Looijenga L."/>
            <person name="Weber B.L."/>
            <person name="Chiew Y.-E."/>
            <person name="DeFazio A."/>
            <person name="Greaves M.F."/>
            <person name="Green A.R."/>
            <person name="Campbell P."/>
            <person name="Birney E."/>
            <person name="Easton D.F."/>
            <person name="Chenevix-Trench G."/>
            <person name="Tan M.-H."/>
            <person name="Khoo S.K."/>
            <person name="Teh B.T."/>
            <person name="Yuen S.T."/>
            <person name="Leung S.Y."/>
            <person name="Wooster R."/>
            <person name="Futreal P.A."/>
            <person name="Stratton M.R."/>
        </authorList>
    </citation>
    <scope>VARIANTS [LARGE SCALE ANALYSIS] VAL-198 AND ARG-282</scope>
</reference>
<feature type="initiator methionine" description="Removed">
    <location>
        <position position="1"/>
    </location>
</feature>
<feature type="chain" id="PRO_0000088181" description="Tyrosine-protein kinase Yes">
    <location>
        <begin position="2"/>
        <end position="543"/>
    </location>
</feature>
<feature type="domain" description="SH3" evidence="6">
    <location>
        <begin position="91"/>
        <end position="152"/>
    </location>
</feature>
<feature type="domain" description="SH2" evidence="5">
    <location>
        <begin position="158"/>
        <end position="255"/>
    </location>
</feature>
<feature type="domain" description="Protein kinase" evidence="4">
    <location>
        <begin position="277"/>
        <end position="530"/>
    </location>
</feature>
<feature type="region of interest" description="Disordered" evidence="8">
    <location>
        <begin position="1"/>
        <end position="45"/>
    </location>
</feature>
<feature type="compositionally biased region" description="Basic and acidic residues" evidence="8">
    <location>
        <begin position="1"/>
        <end position="20"/>
    </location>
</feature>
<feature type="active site" description="Proton acceptor" evidence="4 7">
    <location>
        <position position="396"/>
    </location>
</feature>
<feature type="binding site" evidence="4">
    <location>
        <begin position="283"/>
        <end position="291"/>
    </location>
    <ligand>
        <name>ATP</name>
        <dbReference type="ChEBI" id="CHEBI:30616"/>
    </ligand>
</feature>
<feature type="binding site" evidence="4">
    <location>
        <position position="305"/>
    </location>
    <ligand>
        <name>ATP</name>
        <dbReference type="ChEBI" id="CHEBI:30616"/>
    </ligand>
</feature>
<feature type="modified residue" description="Phosphothreonine" evidence="24">
    <location>
        <position position="21"/>
    </location>
</feature>
<feature type="modified residue" description="Phosphotyrosine" evidence="2">
    <location>
        <position position="32"/>
    </location>
</feature>
<feature type="modified residue" description="Phosphoserine" evidence="24">
    <location>
        <position position="40"/>
    </location>
</feature>
<feature type="modified residue" description="Phosphotyrosine" evidence="26">
    <location>
        <position position="336"/>
    </location>
</feature>
<feature type="modified residue" description="Phosphotyrosine" evidence="26">
    <location>
        <position position="345"/>
    </location>
</feature>
<feature type="modified residue" description="Phosphotyrosine; by autocatalysis" evidence="22">
    <location>
        <position position="426"/>
    </location>
</feature>
<feature type="modified residue" description="Phosphotyrosine" evidence="23">
    <location>
        <position position="446"/>
    </location>
</feature>
<feature type="modified residue" description="Phosphotyrosine; by CSK" evidence="25 26">
    <location>
        <position position="537"/>
    </location>
</feature>
<feature type="lipid moiety-binding region" description="N-myristoyl glycine" evidence="1">
    <location>
        <position position="2"/>
    </location>
</feature>
<feature type="lipid moiety-binding region" description="S-palmitoyl cysteine; in membrane form" evidence="1">
    <location>
        <position position="3"/>
    </location>
</feature>
<feature type="sequence variant" id="VAR_041879" description="In dbSNP:rs34580680." evidence="10">
    <original>I</original>
    <variation>V</variation>
    <location>
        <position position="198"/>
    </location>
</feature>
<feature type="sequence variant" id="VAR_041880" description="In dbSNP:rs35126906." evidence="10">
    <original>K</original>
    <variation>R</variation>
    <location>
        <position position="282"/>
    </location>
</feature>
<feature type="mutagenesis site" description="About 50% loss of CSK-mediated inhibition." evidence="22">
    <original>Y</original>
    <variation>F</variation>
    <location>
        <position position="426"/>
    </location>
</feature>
<feature type="strand" evidence="27">
    <location>
        <begin position="93"/>
        <end position="100"/>
    </location>
</feature>
<feature type="strand" evidence="27">
    <location>
        <begin position="117"/>
        <end position="121"/>
    </location>
</feature>
<feature type="strand" evidence="27">
    <location>
        <begin position="126"/>
        <end position="133"/>
    </location>
</feature>
<feature type="turn" evidence="27">
    <location>
        <begin position="134"/>
        <end position="136"/>
    </location>
</feature>
<feature type="strand" evidence="27">
    <location>
        <begin position="139"/>
        <end position="143"/>
    </location>
</feature>
<feature type="helix" evidence="27">
    <location>
        <begin position="144"/>
        <end position="146"/>
    </location>
</feature>
<feature type="strand" evidence="27">
    <location>
        <begin position="147"/>
        <end position="149"/>
    </location>
</feature>
<keyword id="KW-0002">3D-structure</keyword>
<keyword id="KW-0067">ATP-binding</keyword>
<keyword id="KW-0965">Cell junction</keyword>
<keyword id="KW-1003">Cell membrane</keyword>
<keyword id="KW-0963">Cytoplasm</keyword>
<keyword id="KW-0206">Cytoskeleton</keyword>
<keyword id="KW-0418">Kinase</keyword>
<keyword id="KW-0449">Lipoprotein</keyword>
<keyword id="KW-0472">Membrane</keyword>
<keyword id="KW-0519">Myristate</keyword>
<keyword id="KW-0547">Nucleotide-binding</keyword>
<keyword id="KW-0564">Palmitate</keyword>
<keyword id="KW-0597">Phosphoprotein</keyword>
<keyword id="KW-1267">Proteomics identification</keyword>
<keyword id="KW-0656">Proto-oncogene</keyword>
<keyword id="KW-1185">Reference proteome</keyword>
<keyword id="KW-0727">SH2 domain</keyword>
<keyword id="KW-0728">SH3 domain</keyword>
<keyword id="KW-0808">Transferase</keyword>
<keyword id="KW-0829">Tyrosine-protein kinase</keyword>
<evidence type="ECO:0000250" key="1"/>
<evidence type="ECO:0000250" key="2">
    <source>
        <dbReference type="UniProtKB" id="Q04736"/>
    </source>
</evidence>
<evidence type="ECO:0000250" key="3">
    <source>
        <dbReference type="UniProtKB" id="Q28923"/>
    </source>
</evidence>
<evidence type="ECO:0000255" key="4">
    <source>
        <dbReference type="PROSITE-ProRule" id="PRU00159"/>
    </source>
</evidence>
<evidence type="ECO:0000255" key="5">
    <source>
        <dbReference type="PROSITE-ProRule" id="PRU00191"/>
    </source>
</evidence>
<evidence type="ECO:0000255" key="6">
    <source>
        <dbReference type="PROSITE-ProRule" id="PRU00192"/>
    </source>
</evidence>
<evidence type="ECO:0000255" key="7">
    <source>
        <dbReference type="PROSITE-ProRule" id="PRU10028"/>
    </source>
</evidence>
<evidence type="ECO:0000256" key="8">
    <source>
        <dbReference type="SAM" id="MobiDB-lite"/>
    </source>
</evidence>
<evidence type="ECO:0000269" key="9">
    <source>
    </source>
</evidence>
<evidence type="ECO:0000269" key="10">
    <source>
    </source>
</evidence>
<evidence type="ECO:0000269" key="11">
    <source>
    </source>
</evidence>
<evidence type="ECO:0000269" key="12">
    <source>
    </source>
</evidence>
<evidence type="ECO:0000269" key="13">
    <source>
    </source>
</evidence>
<evidence type="ECO:0000269" key="14">
    <source>
    </source>
</evidence>
<evidence type="ECO:0000269" key="15">
    <source>
    </source>
</evidence>
<evidence type="ECO:0000269" key="16">
    <source>
    </source>
</evidence>
<evidence type="ECO:0000269" key="17">
    <source>
    </source>
</evidence>
<evidence type="ECO:0000269" key="18">
    <source>
    </source>
</evidence>
<evidence type="ECO:0000269" key="19">
    <source>
    </source>
</evidence>
<evidence type="ECO:0000269" key="20">
    <source>
    </source>
</evidence>
<evidence type="ECO:0000269" key="21">
    <source>
    </source>
</evidence>
<evidence type="ECO:0000269" key="22">
    <source>
    </source>
</evidence>
<evidence type="ECO:0000305" key="23"/>
<evidence type="ECO:0007744" key="24">
    <source>
    </source>
</evidence>
<evidence type="ECO:0007744" key="25">
    <source>
    </source>
</evidence>
<evidence type="ECO:0007744" key="26">
    <source>
    </source>
</evidence>
<evidence type="ECO:0007829" key="27">
    <source>
        <dbReference type="PDB" id="2HDA"/>
    </source>
</evidence>
<organism>
    <name type="scientific">Homo sapiens</name>
    <name type="common">Human</name>
    <dbReference type="NCBI Taxonomy" id="9606"/>
    <lineage>
        <taxon>Eukaryota</taxon>
        <taxon>Metazoa</taxon>
        <taxon>Chordata</taxon>
        <taxon>Craniata</taxon>
        <taxon>Vertebrata</taxon>
        <taxon>Euteleostomi</taxon>
        <taxon>Mammalia</taxon>
        <taxon>Eutheria</taxon>
        <taxon>Euarchontoglires</taxon>
        <taxon>Primates</taxon>
        <taxon>Haplorrhini</taxon>
        <taxon>Catarrhini</taxon>
        <taxon>Hominidae</taxon>
        <taxon>Homo</taxon>
    </lineage>
</organism>